<sequence length="336" mass="36888">MASAANSSREQLRKFLNKECLWVLSDASTPQMKVYTATTAVSAVYVPQIAGPPKTYMNVTLIVLKPKKKPTYVTVYINGTLATVARPEVLFTKAVQGPHSLTLMYFGVFSDAVGEAVPVEIRGNPVVTCTDLTTAHVFTTSTAVKTVEELQDITPSEIIPLGRGGAWYAEGALYMFFVNMDMLMCCPNMPTFPSLTHFINLLTRCDNGECVTCYGAGAHVNILRGWTEDDSPGTSGTCPCLLPCTALNNDYVPITGHRALLGLMFKPEDAPFVVGLRFNPPKMHPDMSRVLQGVLANGKEVPCTAQPWTLLRFSDLYSRAMLYNCQVLKRQVLHSY</sequence>
<gene>
    <name type="ORF">BGLF2</name>
</gene>
<keyword id="KW-1078">G1/S host cell cycle checkpoint dysregulation by virus</keyword>
<keyword id="KW-1035">Host cytoplasm</keyword>
<keyword id="KW-1040">Host Golgi apparatus</keyword>
<keyword id="KW-1048">Host nucleus</keyword>
<keyword id="KW-0945">Host-virus interaction</keyword>
<keyword id="KW-1090">Inhibition of host innate immune response by virus</keyword>
<keyword id="KW-1114">Inhibition of host interferon signaling pathway by virus</keyword>
<keyword id="KW-1105">Inhibition of host STAT1 by virus</keyword>
<keyword id="KW-1106">Inhibition of host STAT2 by virus</keyword>
<keyword id="KW-1112">Inhibition of host TYK2 by virus</keyword>
<keyword id="KW-0922">Interferon antiviral system evasion</keyword>
<keyword id="KW-0426">Late protein</keyword>
<keyword id="KW-1121">Modulation of host cell cycle by virus</keyword>
<keyword id="KW-1185">Reference proteome</keyword>
<keyword id="KW-0899">Viral immunoevasion</keyword>
<keyword id="KW-0946">Virion</keyword>
<keyword id="KW-0920">Virion tegument</keyword>
<accession>P0CK53</accession>
<accession>P03221</accession>
<accession>Q777C8</accession>
<feature type="chain" id="PRO_0000115955" description="Cytoplasmic envelopment protein 2">
    <location>
        <begin position="1"/>
        <end position="336"/>
    </location>
</feature>
<feature type="region of interest" description="Interaction with host BBLF1" evidence="7">
    <location>
        <begin position="67"/>
        <end position="69"/>
    </location>
</feature>
<feature type="mutagenesis site" description="Weaker interaction with BBLF1." evidence="7">
    <original>KKK</original>
    <variation>AAA</variation>
    <location>
        <begin position="67"/>
        <end position="69"/>
    </location>
</feature>
<proteinExistence type="evidence at protein level"/>
<dbReference type="EMBL" id="M60514">
    <property type="protein sequence ID" value="AAA45871.1"/>
    <property type="molecule type" value="mRNA"/>
</dbReference>
<dbReference type="EMBL" id="AJ507799">
    <property type="protein sequence ID" value="CAD53441.1"/>
    <property type="molecule type" value="Genomic_DNA"/>
</dbReference>
<dbReference type="EMBL" id="V01555">
    <property type="protein sequence ID" value="CAA24831.1"/>
    <property type="molecule type" value="Genomic_DNA"/>
</dbReference>
<dbReference type="EMBL" id="S77132">
    <property type="protein sequence ID" value="AAB21113.1"/>
    <property type="molecule type" value="mRNA"/>
</dbReference>
<dbReference type="PIR" id="C43044">
    <property type="entry name" value="QQBE40"/>
</dbReference>
<dbReference type="RefSeq" id="YP_401691.1">
    <property type="nucleotide sequence ID" value="NC_007605.1"/>
</dbReference>
<dbReference type="BioGRID" id="971810">
    <property type="interactions" value="1"/>
</dbReference>
<dbReference type="IntAct" id="P0CK53">
    <property type="interactions" value="6"/>
</dbReference>
<dbReference type="DNASU" id="3783768"/>
<dbReference type="GeneID" id="3783768"/>
<dbReference type="KEGG" id="vg:3783768"/>
<dbReference type="Proteomes" id="UP000153037">
    <property type="component" value="Segment"/>
</dbReference>
<dbReference type="GO" id="GO:0044177">
    <property type="term" value="C:host cell Golgi apparatus"/>
    <property type="evidence" value="ECO:0007669"/>
    <property type="project" value="UniProtKB-SubCell"/>
</dbReference>
<dbReference type="GO" id="GO:0042025">
    <property type="term" value="C:host cell nucleus"/>
    <property type="evidence" value="ECO:0007669"/>
    <property type="project" value="UniProtKB-SubCell"/>
</dbReference>
<dbReference type="GO" id="GO:0019033">
    <property type="term" value="C:viral tegument"/>
    <property type="evidence" value="ECO:0007669"/>
    <property type="project" value="UniProtKB-SubCell"/>
</dbReference>
<dbReference type="GO" id="GO:0039645">
    <property type="term" value="P:symbiont-mediated perturbation of host cell cycle G1/S transition checkpoint"/>
    <property type="evidence" value="ECO:0007669"/>
    <property type="project" value="UniProtKB-KW"/>
</dbReference>
<dbReference type="GO" id="GO:0039574">
    <property type="term" value="P:symbiont-mediated suppression of host JAK-STAT cascade via inhibition of host TYK2 activity"/>
    <property type="evidence" value="ECO:0007669"/>
    <property type="project" value="UniProtKB-KW"/>
</dbReference>
<dbReference type="GO" id="GO:0039563">
    <property type="term" value="P:symbiont-mediated suppression of host JAK-STAT cascade via inhibition of STAT1 activity"/>
    <property type="evidence" value="ECO:0007669"/>
    <property type="project" value="UniProtKB-KW"/>
</dbReference>
<dbReference type="GO" id="GO:0039564">
    <property type="term" value="P:symbiont-mediated suppression of host JAK-STAT cascade via inhibition of STAT2 activity"/>
    <property type="evidence" value="ECO:0007669"/>
    <property type="project" value="UniProtKB-KW"/>
</dbReference>
<dbReference type="GO" id="GO:0039502">
    <property type="term" value="P:symbiont-mediated suppression of host type I interferon-mediated signaling pathway"/>
    <property type="evidence" value="ECO:0007669"/>
    <property type="project" value="UniProtKB-KW"/>
</dbReference>
<dbReference type="HAMAP" id="MF_04039">
    <property type="entry name" value="HSV_CEP2"/>
    <property type="match status" value="1"/>
</dbReference>
<dbReference type="InterPro" id="IPR004286">
    <property type="entry name" value="Herpes_UL16/UL94"/>
</dbReference>
<dbReference type="Pfam" id="PF03044">
    <property type="entry name" value="Herpes_UL16"/>
    <property type="match status" value="1"/>
</dbReference>
<name>CEP2_EBVB9</name>
<reference key="1">
    <citation type="journal article" date="1984" name="Nature">
        <title>DNA sequence and expression of the B95-8 Epstein-Barr virus genome.</title>
        <authorList>
            <person name="Baer R."/>
            <person name="Bankier A.T."/>
            <person name="Biggin M.D."/>
            <person name="Deininger P.L."/>
            <person name="Farrell P.J."/>
            <person name="Gibson T.J."/>
            <person name="Hatfull G."/>
            <person name="Hudson G.S."/>
            <person name="Satchwell S.C."/>
            <person name="Seguin C."/>
            <person name="Tuffnell P.S."/>
            <person name="Barrell B.G."/>
        </authorList>
    </citation>
    <scope>NUCLEOTIDE SEQUENCE [LARGE SCALE GENOMIC DNA]</scope>
</reference>
<reference key="2">
    <citation type="journal article" date="1991" name="J. Gen. Virol.">
        <title>Cloning and characterization of cDNA clones corresponding to transcripts from the BamHI G region of the Epstein-Barr virus genome and expression of BGLF2.</title>
        <authorList>
            <person name="Chen M.R."/>
            <person name="Hsu T.Y."/>
            <person name="Lin S.W."/>
            <person name="Chen J.Y."/>
            <person name="Yang C.S."/>
        </authorList>
    </citation>
    <scope>NUCLEOTIDE SEQUENCE [MRNA]</scope>
</reference>
<reference key="3">
    <citation type="journal article" date="2003" name="Virology">
        <title>Updated Epstein-Barr virus (EBV) DNA sequence and analysis of a promoter for the BART (CST, BARF0) RNAs of EBV.</title>
        <authorList>
            <person name="de Jesus O."/>
            <person name="Smith P.R."/>
            <person name="Spender L.C."/>
            <person name="Elgueta Karstegl C."/>
            <person name="Niller H.H."/>
            <person name="Huang D."/>
            <person name="Farrell P.J."/>
        </authorList>
    </citation>
    <scope>GENOME REANNOTATION</scope>
</reference>
<reference key="4">
    <citation type="journal article" date="2004" name="Proc. Natl. Acad. Sci. U.S.A.">
        <title>Proteins of purified Epstein-Barr virus.</title>
        <authorList>
            <person name="Johannsen E."/>
            <person name="Luftig M."/>
            <person name="Chase M.R."/>
            <person name="Weicksel S."/>
            <person name="Cahir-McFarland E."/>
            <person name="Illanes D."/>
            <person name="Sarracino D."/>
            <person name="Kieff E."/>
        </authorList>
    </citation>
    <scope>IDENTIFICATION</scope>
    <scope>SUBCELLULAR LOCATION</scope>
</reference>
<reference key="5">
    <citation type="journal article" date="2014" name="J. Virol.">
        <title>Identification of herpesvirus proteins that contribute to G1/S arrest.</title>
        <authorList>
            <person name="Paladino P."/>
            <person name="Marcon E."/>
            <person name="Greenblatt J."/>
            <person name="Frappier L."/>
        </authorList>
    </citation>
    <scope>FUNCTION</scope>
</reference>
<reference key="6">
    <citation type="journal article" date="2016" name="J. Virol.">
        <title>Epstein-Barr Virus (EBV) Tegument Protein BGLF2 Promotes EBV Reactivation through Activation of the p38 Mitogen-Activated Protein Kinase.</title>
        <authorList>
            <person name="Liu X."/>
            <person name="Cohen J.I."/>
        </authorList>
    </citation>
    <scope>FUNCTION</scope>
    <scope>SUBUNIT</scope>
</reference>
<reference key="7">
    <citation type="journal article" date="2017" name="J. Virol.">
        <title>Epstein-Barr Virus BKRF4 Gene Product Is Required for Efficient Progeny Production.</title>
        <authorList>
            <person name="Masud H.M.A.A."/>
            <person name="Watanabe T."/>
            <person name="Yoshida M."/>
            <person name="Sato Y."/>
            <person name="Goshima F."/>
            <person name="Kimura H."/>
            <person name="Murata T."/>
        </authorList>
    </citation>
    <scope>INTERACTION WITH BKRF4</scope>
    <scope>SUBCELLULAR LOCATION</scope>
</reference>
<reference key="8">
    <citation type="journal article" date="2018" name="MSphere">
        <title>BGLF2 Increases Infectivity of Epstein-Barr Virus by Activating AP-1 upon De Novo Infection.</title>
        <authorList>
            <person name="Konishi N."/>
            <person name="Narita Y."/>
            <person name="Hijioka F."/>
            <person name="Masud H.M.A.A."/>
            <person name="Sato Y."/>
            <person name="Kimura H."/>
            <person name="Murata T."/>
        </authorList>
    </citation>
    <scope>FUNCTION</scope>
</reference>
<reference key="9">
    <citation type="journal article" date="2019" name="Front. Microbiol.">
        <title>Interaction Between BGLF2 and BBLF1 Is Required for the Efficient Production of Infectious Epstein-Barr Virus Particles.</title>
        <authorList>
            <person name="Hung C.H."/>
            <person name="Chiu Y.F."/>
            <person name="Wang W.H."/>
            <person name="Chen L.W."/>
            <person name="Chang P.J."/>
            <person name="Huang T.Y."/>
            <person name="Lin Y.J."/>
            <person name="Tsai W.J."/>
            <person name="Yang C.C."/>
        </authorList>
    </citation>
    <scope>SUBCELLULAR LOCATION</scope>
    <scope>INTERACTION WITH BBLF1</scope>
    <scope>INDUCTION</scope>
    <scope>MUTAGENESIS OF 67-LYS--LYS-69</scope>
</reference>
<reference key="10">
    <citation type="journal article" date="2020" name="J. Virol.">
        <title>Epstein-Barr Virus (EBV) Tegument Protein BGLF2 Suppresses Type I Interferon Signaling To Promote EBV Reactivation.</title>
        <authorList>
            <person name="Liu X."/>
            <person name="Sadaoka T."/>
            <person name="Krogmann T."/>
            <person name="Cohen J.I."/>
        </authorList>
    </citation>
    <scope>FUNCTION</scope>
    <scope>INTERACTION WITH HOST TYK2</scope>
</reference>
<reference key="11">
    <citation type="journal article" date="2021" name="J. Virol.">
        <title>Suppression of JAK-STAT Signaling by Epstein-Barr Virus Tegument Protein BGLF2 through Recruitment of SHP1 Phosphatase and Promotion of STAT2 Degradation.</title>
        <authorList>
            <person name="Jangra S."/>
            <person name="Bharti A."/>
            <person name="Lui W.Y."/>
            <person name="Chaudhary V."/>
            <person name="Botelho M.G."/>
            <person name="Yuen K.S."/>
            <person name="Jin D.Y."/>
        </authorList>
    </citation>
    <scope>FUNCTION</scope>
    <scope>INTERACTION WITH HOST STAT1</scope>
    <scope>INTERACTION WITH HOST STAT2</scope>
    <scope>INTERACTION WITH CUL1</scope>
</reference>
<reference key="12">
    <citation type="journal article" date="2022" name="PLoS Pathog.">
        <title>Epstein-Barr Virus BGLF2 commandeers RISC to interfere with cellular miRNA function.</title>
        <authorList>
            <person name="Campbell A.M."/>
            <person name="De La Cruz-Herrera C.F."/>
            <person name="Marcon E."/>
            <person name="Greenblatt J."/>
            <person name="Frappier L."/>
        </authorList>
    </citation>
    <scope>FUNCTION</scope>
    <scope>INTERACTION WITH HOST AGO2</scope>
</reference>
<reference key="13">
    <citation type="journal article" date="2022" name="Cell Commun. Signal.">
        <title>Epstein-Barr virus tegument protein BGLF2 in exosomes released from virus-producing cells facilitates de novo infection.</title>
        <authorList>
            <person name="Sato Y."/>
            <person name="Yaguchi M."/>
            <person name="Okuno Y."/>
            <person name="Ishimaru H."/>
            <person name="Sagou K."/>
            <person name="Ozaki S."/>
            <person name="Suzuki T."/>
            <person name="Inagaki T."/>
            <person name="Umeda M."/>
            <person name="Watanabe T."/>
            <person name="Fujimuro M."/>
            <person name="Murata T."/>
            <person name="Kimura H."/>
        </authorList>
    </citation>
    <scope>SUBCELLULAR LOCATION</scope>
    <scope>FUNCTION</scope>
</reference>
<comment type="function">
    <text evidence="1 3 4 6 8 9 10 11">Plays a critical role in cytoplasmic virus egress. Participates in the final step of tegumentation and envelope acquisition within the host cytoplasm by directly interacting with the capsid. Upon virion binding to target cell, a signaling cascade is triggered to disrupt the interaction with the capsid, thereby preparing capsid uncoating. Activates the AP-1 pathway and enhances EBV reactivation and virus release (PubMed:26559845, PubMed:29695622). Inhibits type I IFN-induced TYK2, STAT1 and STAT3 phosphorylation, thereby impairing type I IFN signaling and counteracting the ability of type I IFN to suppress the reactivation of EBV (PubMed:32213613, PubMed:34319780). Recruits SHP1 phosphatase to dephosphorylate STAT1 (PubMed:34319780). Mediates STAT2 ubiquitination and proteasomal degradation (PubMed:34319780). Also suppresses type II and type III IFN signaling (PubMed:34319780). Contributes to G1/S arrest in the host cell (PubMed:24501404). Acts as an miRNA regulator that interferes with the function of RISC in miRNA-mediated mRNA silencing (PubMed:35007297). As a result, SUMOylation is increased (PubMed:35007297). When encapsulated in the exosomes released by EBV-infected host cells, may facilitate the infection in recipient cells (By similarity) (PubMed:35729616).</text>
</comment>
<comment type="subunit">
    <text evidence="1 4 5 7 8 9 10">Homodimer (PubMed:26559845). Interacts with BBLF1 (PubMed:32038519). Interacts with the capsid. Interacts with BKRF4 (via C-terminus); this interaction is important for infectious virion production (PubMed:28904200). Interacts with host TYK2; this interaction participates to the inhibition of host type I IFN signaling (PubMed:32213613). Interacts with host STAT1; this interaction leads to STAT1 dephosphorylation and inhibition (PubMed:34319780). Interacts with host STAT2; this interaction leads to STAT2 degradation (PubMed:34319780). Interacts with host CUL1; this interaction might facilitate CUL1 recruitment to STAT2, leading to ubiquitination and degradation of the latter (PubMed:34319780). Interacts with host AGO2; this interaction participates to the regulation of the host miRNA leading to enhanced SUMOylation (By similarity) (PubMed:35007297).</text>
</comment>
<comment type="interaction">
    <interactant intactId="EBI-2621010">
        <id>P0CK53</id>
    </interactant>
    <interactant intactId="EBI-2621017">
        <id>A0A0C7TRZ7</id>
        <label>BSLF1</label>
    </interactant>
    <organismsDiffer>true</organismsDiffer>
    <experiments>2</experiments>
</comment>
<comment type="subcellular location">
    <subcellularLocation>
        <location evidence="1 2">Virion tegument</location>
    </subcellularLocation>
    <subcellularLocation>
        <location evidence="1 5 7">Host cytoplasm</location>
    </subcellularLocation>
    <subcellularLocation>
        <location evidence="1 5 7">Host nucleus</location>
    </subcellularLocation>
    <subcellularLocation>
        <location evidence="1 7">Host Golgi apparatus</location>
        <location evidence="1 7">Host trans-Golgi network</location>
    </subcellularLocation>
    <text evidence="1 7 11">Localizes in the host nucleus up to 18 hours postinfection, but at later times localizes to punctate, cytoplasmic structures. Associates with the capsid before the final envelopment. Recruited to the TGN via the interaction with BBLF1 (PubMed:32038519). Also found in the exosomes released by the host cell (PubMed:35729616).</text>
</comment>
<comment type="induction">
    <text evidence="1 7">Expressed in the late phase of the viral replicative cycle.</text>
</comment>
<comment type="similarity">
    <text evidence="1">Belongs to the herpesviridae cytoplasmic envelopment protein 2 family.</text>
</comment>
<organism>
    <name type="scientific">Epstein-Barr virus (strain B95-8)</name>
    <name type="common">HHV-4</name>
    <name type="synonym">Human herpesvirus 4</name>
    <dbReference type="NCBI Taxonomy" id="10377"/>
    <lineage>
        <taxon>Viruses</taxon>
        <taxon>Duplodnaviria</taxon>
        <taxon>Heunggongvirae</taxon>
        <taxon>Peploviricota</taxon>
        <taxon>Herviviricetes</taxon>
        <taxon>Herpesvirales</taxon>
        <taxon>Orthoherpesviridae</taxon>
        <taxon>Gammaherpesvirinae</taxon>
        <taxon>Lymphocryptovirus</taxon>
        <taxon>Lymphocryptovirus humangamma4</taxon>
        <taxon>Epstein-Barr virus (strain GD1)</taxon>
    </lineage>
</organism>
<organismHost>
    <name type="scientific">Homo sapiens</name>
    <name type="common">Human</name>
    <dbReference type="NCBI Taxonomy" id="9606"/>
</organismHost>
<protein>
    <recommendedName>
        <fullName evidence="1">Cytoplasmic envelopment protein 2</fullName>
    </recommendedName>
    <alternativeName>
        <fullName evidence="1 12">Tegument protein BGLF2</fullName>
    </alternativeName>
</protein>
<evidence type="ECO:0000255" key="1">
    <source>
        <dbReference type="HAMAP-Rule" id="MF_04039"/>
    </source>
</evidence>
<evidence type="ECO:0000269" key="2">
    <source>
    </source>
</evidence>
<evidence type="ECO:0000269" key="3">
    <source>
    </source>
</evidence>
<evidence type="ECO:0000269" key="4">
    <source>
    </source>
</evidence>
<evidence type="ECO:0000269" key="5">
    <source>
    </source>
</evidence>
<evidence type="ECO:0000269" key="6">
    <source>
    </source>
</evidence>
<evidence type="ECO:0000269" key="7">
    <source>
    </source>
</evidence>
<evidence type="ECO:0000269" key="8">
    <source>
    </source>
</evidence>
<evidence type="ECO:0000269" key="9">
    <source>
    </source>
</evidence>
<evidence type="ECO:0000269" key="10">
    <source>
    </source>
</evidence>
<evidence type="ECO:0000269" key="11">
    <source>
    </source>
</evidence>
<evidence type="ECO:0000303" key="12">
    <source>
    </source>
</evidence>